<protein>
    <recommendedName>
        <fullName evidence="1">FMN-dependent NADH:quinone oxidoreductase</fullName>
        <ecNumber evidence="1">1.6.5.-</ecNumber>
    </recommendedName>
    <alternativeName>
        <fullName evidence="1">Azo-dye reductase</fullName>
    </alternativeName>
    <alternativeName>
        <fullName evidence="1">FMN-dependent NADH-azo compound oxidoreductase</fullName>
    </alternativeName>
    <alternativeName>
        <fullName evidence="1">FMN-dependent NADH-azoreductase</fullName>
        <ecNumber evidence="1">1.7.1.17</ecNumber>
    </alternativeName>
</protein>
<evidence type="ECO:0000255" key="1">
    <source>
        <dbReference type="HAMAP-Rule" id="MF_01216"/>
    </source>
</evidence>
<keyword id="KW-0285">Flavoprotein</keyword>
<keyword id="KW-0288">FMN</keyword>
<keyword id="KW-0520">NAD</keyword>
<keyword id="KW-0560">Oxidoreductase</keyword>
<keyword id="KW-1185">Reference proteome</keyword>
<name>AZOR_SACD2</name>
<accession>Q21E80</accession>
<feature type="chain" id="PRO_0000245966" description="FMN-dependent NADH:quinone oxidoreductase">
    <location>
        <begin position="1"/>
        <end position="209"/>
    </location>
</feature>
<feature type="binding site" evidence="1">
    <location>
        <position position="18"/>
    </location>
    <ligand>
        <name>FMN</name>
        <dbReference type="ChEBI" id="CHEBI:58210"/>
    </ligand>
</feature>
<feature type="binding site" evidence="1">
    <location>
        <begin position="102"/>
        <end position="105"/>
    </location>
    <ligand>
        <name>FMN</name>
        <dbReference type="ChEBI" id="CHEBI:58210"/>
    </ligand>
</feature>
<feature type="binding site" evidence="1">
    <location>
        <begin position="146"/>
        <end position="149"/>
    </location>
    <ligand>
        <name>FMN</name>
        <dbReference type="ChEBI" id="CHEBI:58210"/>
    </ligand>
</feature>
<comment type="function">
    <text evidence="1">Quinone reductase that provides resistance to thiol-specific stress caused by electrophilic quinones.</text>
</comment>
<comment type="function">
    <text evidence="1">Also exhibits azoreductase activity. Catalyzes the reductive cleavage of the azo bond in aromatic azo compounds to the corresponding amines.</text>
</comment>
<comment type="catalytic activity">
    <reaction evidence="1">
        <text>2 a quinone + NADH + H(+) = 2 a 1,4-benzosemiquinone + NAD(+)</text>
        <dbReference type="Rhea" id="RHEA:65952"/>
        <dbReference type="ChEBI" id="CHEBI:15378"/>
        <dbReference type="ChEBI" id="CHEBI:57540"/>
        <dbReference type="ChEBI" id="CHEBI:57945"/>
        <dbReference type="ChEBI" id="CHEBI:132124"/>
        <dbReference type="ChEBI" id="CHEBI:134225"/>
    </reaction>
</comment>
<comment type="catalytic activity">
    <reaction evidence="1">
        <text>N,N-dimethyl-1,4-phenylenediamine + anthranilate + 2 NAD(+) = 2-(4-dimethylaminophenyl)diazenylbenzoate + 2 NADH + 2 H(+)</text>
        <dbReference type="Rhea" id="RHEA:55872"/>
        <dbReference type="ChEBI" id="CHEBI:15378"/>
        <dbReference type="ChEBI" id="CHEBI:15783"/>
        <dbReference type="ChEBI" id="CHEBI:16567"/>
        <dbReference type="ChEBI" id="CHEBI:57540"/>
        <dbReference type="ChEBI" id="CHEBI:57945"/>
        <dbReference type="ChEBI" id="CHEBI:71579"/>
        <dbReference type="EC" id="1.7.1.17"/>
    </reaction>
</comment>
<comment type="cofactor">
    <cofactor evidence="1">
        <name>FMN</name>
        <dbReference type="ChEBI" id="CHEBI:58210"/>
    </cofactor>
    <text evidence="1">Binds 1 FMN per subunit.</text>
</comment>
<comment type="subunit">
    <text evidence="1">Homodimer.</text>
</comment>
<comment type="similarity">
    <text evidence="1">Belongs to the azoreductase type 1 family.</text>
</comment>
<organism>
    <name type="scientific">Saccharophagus degradans (strain 2-40 / ATCC 43961 / DSM 17024)</name>
    <dbReference type="NCBI Taxonomy" id="203122"/>
    <lineage>
        <taxon>Bacteria</taxon>
        <taxon>Pseudomonadati</taxon>
        <taxon>Pseudomonadota</taxon>
        <taxon>Gammaproteobacteria</taxon>
        <taxon>Cellvibrionales</taxon>
        <taxon>Cellvibrionaceae</taxon>
        <taxon>Saccharophagus</taxon>
    </lineage>
</organism>
<dbReference type="EC" id="1.6.5.-" evidence="1"/>
<dbReference type="EC" id="1.7.1.17" evidence="1"/>
<dbReference type="EMBL" id="CP000282">
    <property type="protein sequence ID" value="ABD82999.1"/>
    <property type="molecule type" value="Genomic_DNA"/>
</dbReference>
<dbReference type="RefSeq" id="WP_011470214.1">
    <property type="nucleotide sequence ID" value="NC_007912.1"/>
</dbReference>
<dbReference type="SMR" id="Q21E80"/>
<dbReference type="STRING" id="203122.Sde_3744"/>
<dbReference type="GeneID" id="98615350"/>
<dbReference type="KEGG" id="sde:Sde_3744"/>
<dbReference type="eggNOG" id="COG1182">
    <property type="taxonomic scope" value="Bacteria"/>
</dbReference>
<dbReference type="HOGENOM" id="CLU_088964_0_0_6"/>
<dbReference type="OrthoDB" id="9787136at2"/>
<dbReference type="Proteomes" id="UP000001947">
    <property type="component" value="Chromosome"/>
</dbReference>
<dbReference type="GO" id="GO:0009055">
    <property type="term" value="F:electron transfer activity"/>
    <property type="evidence" value="ECO:0007669"/>
    <property type="project" value="UniProtKB-UniRule"/>
</dbReference>
<dbReference type="GO" id="GO:0010181">
    <property type="term" value="F:FMN binding"/>
    <property type="evidence" value="ECO:0007669"/>
    <property type="project" value="UniProtKB-UniRule"/>
</dbReference>
<dbReference type="GO" id="GO:0016652">
    <property type="term" value="F:oxidoreductase activity, acting on NAD(P)H as acceptor"/>
    <property type="evidence" value="ECO:0007669"/>
    <property type="project" value="UniProtKB-UniRule"/>
</dbReference>
<dbReference type="GO" id="GO:0016655">
    <property type="term" value="F:oxidoreductase activity, acting on NAD(P)H, quinone or similar compound as acceptor"/>
    <property type="evidence" value="ECO:0007669"/>
    <property type="project" value="InterPro"/>
</dbReference>
<dbReference type="Gene3D" id="3.40.50.360">
    <property type="match status" value="1"/>
</dbReference>
<dbReference type="HAMAP" id="MF_01216">
    <property type="entry name" value="Azoreductase_type1"/>
    <property type="match status" value="1"/>
</dbReference>
<dbReference type="InterPro" id="IPR003680">
    <property type="entry name" value="Flavodoxin_fold"/>
</dbReference>
<dbReference type="InterPro" id="IPR029039">
    <property type="entry name" value="Flavoprotein-like_sf"/>
</dbReference>
<dbReference type="InterPro" id="IPR050104">
    <property type="entry name" value="FMN-dep_NADH:Q_OxRdtase_AzoR1"/>
</dbReference>
<dbReference type="InterPro" id="IPR023048">
    <property type="entry name" value="NADH:quinone_OxRdtase_FMN_depd"/>
</dbReference>
<dbReference type="PANTHER" id="PTHR43741">
    <property type="entry name" value="FMN-DEPENDENT NADH-AZOREDUCTASE 1"/>
    <property type="match status" value="1"/>
</dbReference>
<dbReference type="PANTHER" id="PTHR43741:SF2">
    <property type="entry name" value="FMN-DEPENDENT NADH:QUINONE OXIDOREDUCTASE"/>
    <property type="match status" value="1"/>
</dbReference>
<dbReference type="Pfam" id="PF02525">
    <property type="entry name" value="Flavodoxin_2"/>
    <property type="match status" value="1"/>
</dbReference>
<dbReference type="SUPFAM" id="SSF52218">
    <property type="entry name" value="Flavoproteins"/>
    <property type="match status" value="1"/>
</dbReference>
<proteinExistence type="inferred from homology"/>
<reference key="1">
    <citation type="journal article" date="2008" name="PLoS Genet.">
        <title>Complete genome sequence of the complex carbohydrate-degrading marine bacterium, Saccharophagus degradans strain 2-40 T.</title>
        <authorList>
            <person name="Weiner R.M."/>
            <person name="Taylor L.E. II"/>
            <person name="Henrissat B."/>
            <person name="Hauser L."/>
            <person name="Land M."/>
            <person name="Coutinho P.M."/>
            <person name="Rancurel C."/>
            <person name="Saunders E.H."/>
            <person name="Longmire A.G."/>
            <person name="Zhang H."/>
            <person name="Bayer E.A."/>
            <person name="Gilbert H.J."/>
            <person name="Larimer F."/>
            <person name="Zhulin I.B."/>
            <person name="Ekborg N.A."/>
            <person name="Lamed R."/>
            <person name="Richardson P.M."/>
            <person name="Borovok I."/>
            <person name="Hutcheson S."/>
        </authorList>
    </citation>
    <scope>NUCLEOTIDE SEQUENCE [LARGE SCALE GENOMIC DNA]</scope>
    <source>
        <strain>2-40 / ATCC 43961 / DSM 17024</strain>
    </source>
</reference>
<sequence length="209" mass="22279">MTTESQSAVKTILHVESSLFGEGGVSSQLSTELVTKLQNKYADVNAKVNTNVKIVKRNLAAEPIPHLDLATITAIGEGKPVIGDTLIQELKDADIVVLGVPMYNFGVPSGLKAWFDHIARAGSTFKYTETGPVGLLENKKVYVVTSRGGYHKDAASDVEVPFLKTFLGFLGLNDVEFIYAEGLNLSGKREQGLADASAKIAALVGEEAA</sequence>
<gene>
    <name evidence="1" type="primary">azoR</name>
    <name type="ordered locus">Sde_3744</name>
</gene>